<accession>C3PBP1</accession>
<reference key="1">
    <citation type="submission" date="2009-04" db="EMBL/GenBank/DDBJ databases">
        <title>Genome sequence of Bacillus anthracis A0248.</title>
        <authorList>
            <person name="Dodson R.J."/>
            <person name="Munk A.C."/>
            <person name="Bruce D."/>
            <person name="Detter C."/>
            <person name="Tapia R."/>
            <person name="Sutton G."/>
            <person name="Sims D."/>
            <person name="Brettin T."/>
        </authorList>
    </citation>
    <scope>NUCLEOTIDE SEQUENCE [LARGE SCALE GENOMIC DNA]</scope>
    <source>
        <strain>A0248</strain>
    </source>
</reference>
<proteinExistence type="inferred from homology"/>
<organism>
    <name type="scientific">Bacillus anthracis (strain A0248)</name>
    <dbReference type="NCBI Taxonomy" id="592021"/>
    <lineage>
        <taxon>Bacteria</taxon>
        <taxon>Bacillati</taxon>
        <taxon>Bacillota</taxon>
        <taxon>Bacilli</taxon>
        <taxon>Bacillales</taxon>
        <taxon>Bacillaceae</taxon>
        <taxon>Bacillus</taxon>
        <taxon>Bacillus cereus group</taxon>
    </lineage>
</organism>
<evidence type="ECO:0000255" key="1">
    <source>
        <dbReference type="HAMAP-Rule" id="MF_01588"/>
    </source>
</evidence>
<dbReference type="EC" id="6.5.1.2" evidence="1"/>
<dbReference type="EMBL" id="CP001598">
    <property type="protein sequence ID" value="ACQ50958.1"/>
    <property type="molecule type" value="Genomic_DNA"/>
</dbReference>
<dbReference type="RefSeq" id="WP_000031433.1">
    <property type="nucleotide sequence ID" value="NC_012659.1"/>
</dbReference>
<dbReference type="SMR" id="C3PBP1"/>
<dbReference type="GeneID" id="45020364"/>
<dbReference type="KEGG" id="bai:BAA_0360"/>
<dbReference type="HOGENOM" id="CLU_007764_2_1_9"/>
<dbReference type="GO" id="GO:0005829">
    <property type="term" value="C:cytosol"/>
    <property type="evidence" value="ECO:0007669"/>
    <property type="project" value="TreeGrafter"/>
</dbReference>
<dbReference type="GO" id="GO:0003677">
    <property type="term" value="F:DNA binding"/>
    <property type="evidence" value="ECO:0007669"/>
    <property type="project" value="InterPro"/>
</dbReference>
<dbReference type="GO" id="GO:0003911">
    <property type="term" value="F:DNA ligase (NAD+) activity"/>
    <property type="evidence" value="ECO:0007669"/>
    <property type="project" value="UniProtKB-UniRule"/>
</dbReference>
<dbReference type="GO" id="GO:0046872">
    <property type="term" value="F:metal ion binding"/>
    <property type="evidence" value="ECO:0007669"/>
    <property type="project" value="UniProtKB-KW"/>
</dbReference>
<dbReference type="GO" id="GO:0006281">
    <property type="term" value="P:DNA repair"/>
    <property type="evidence" value="ECO:0007669"/>
    <property type="project" value="UniProtKB-KW"/>
</dbReference>
<dbReference type="GO" id="GO:0006260">
    <property type="term" value="P:DNA replication"/>
    <property type="evidence" value="ECO:0007669"/>
    <property type="project" value="UniProtKB-KW"/>
</dbReference>
<dbReference type="CDD" id="cd17748">
    <property type="entry name" value="BRCT_DNA_ligase_like"/>
    <property type="match status" value="1"/>
</dbReference>
<dbReference type="CDD" id="cd00114">
    <property type="entry name" value="LIGANc"/>
    <property type="match status" value="1"/>
</dbReference>
<dbReference type="FunFam" id="1.10.150.20:FF:000006">
    <property type="entry name" value="DNA ligase"/>
    <property type="match status" value="1"/>
</dbReference>
<dbReference type="FunFam" id="1.10.150.20:FF:000007">
    <property type="entry name" value="DNA ligase"/>
    <property type="match status" value="1"/>
</dbReference>
<dbReference type="FunFam" id="1.10.287.610:FF:000002">
    <property type="entry name" value="DNA ligase"/>
    <property type="match status" value="1"/>
</dbReference>
<dbReference type="FunFam" id="2.40.50.140:FF:000012">
    <property type="entry name" value="DNA ligase"/>
    <property type="match status" value="1"/>
</dbReference>
<dbReference type="FunFam" id="3.30.470.30:FF:000001">
    <property type="entry name" value="DNA ligase"/>
    <property type="match status" value="1"/>
</dbReference>
<dbReference type="FunFam" id="3.40.50.10190:FF:000026">
    <property type="entry name" value="DNA ligase"/>
    <property type="match status" value="1"/>
</dbReference>
<dbReference type="FunFam" id="6.20.10.30:FF:000002">
    <property type="entry name" value="DNA ligase"/>
    <property type="match status" value="1"/>
</dbReference>
<dbReference type="Gene3D" id="6.20.10.30">
    <property type="match status" value="1"/>
</dbReference>
<dbReference type="Gene3D" id="1.10.150.20">
    <property type="entry name" value="5' to 3' exonuclease, C-terminal subdomain"/>
    <property type="match status" value="2"/>
</dbReference>
<dbReference type="Gene3D" id="3.40.50.10190">
    <property type="entry name" value="BRCT domain"/>
    <property type="match status" value="1"/>
</dbReference>
<dbReference type="Gene3D" id="3.30.470.30">
    <property type="entry name" value="DNA ligase/mRNA capping enzyme"/>
    <property type="match status" value="1"/>
</dbReference>
<dbReference type="Gene3D" id="1.10.287.610">
    <property type="entry name" value="Helix hairpin bin"/>
    <property type="match status" value="1"/>
</dbReference>
<dbReference type="Gene3D" id="2.40.50.140">
    <property type="entry name" value="Nucleic acid-binding proteins"/>
    <property type="match status" value="1"/>
</dbReference>
<dbReference type="HAMAP" id="MF_01588">
    <property type="entry name" value="DNA_ligase_A"/>
    <property type="match status" value="1"/>
</dbReference>
<dbReference type="InterPro" id="IPR001357">
    <property type="entry name" value="BRCT_dom"/>
</dbReference>
<dbReference type="InterPro" id="IPR036420">
    <property type="entry name" value="BRCT_dom_sf"/>
</dbReference>
<dbReference type="InterPro" id="IPR041663">
    <property type="entry name" value="DisA/LigA_HHH"/>
</dbReference>
<dbReference type="InterPro" id="IPR001679">
    <property type="entry name" value="DNA_ligase"/>
</dbReference>
<dbReference type="InterPro" id="IPR018239">
    <property type="entry name" value="DNA_ligase_AS"/>
</dbReference>
<dbReference type="InterPro" id="IPR033136">
    <property type="entry name" value="DNA_ligase_CS"/>
</dbReference>
<dbReference type="InterPro" id="IPR013839">
    <property type="entry name" value="DNAligase_adenylation"/>
</dbReference>
<dbReference type="InterPro" id="IPR013840">
    <property type="entry name" value="DNAligase_N"/>
</dbReference>
<dbReference type="InterPro" id="IPR003583">
    <property type="entry name" value="Hlx-hairpin-Hlx_DNA-bd_motif"/>
</dbReference>
<dbReference type="InterPro" id="IPR012340">
    <property type="entry name" value="NA-bd_OB-fold"/>
</dbReference>
<dbReference type="InterPro" id="IPR004150">
    <property type="entry name" value="NAD_DNA_ligase_OB"/>
</dbReference>
<dbReference type="InterPro" id="IPR010994">
    <property type="entry name" value="RuvA_2-like"/>
</dbReference>
<dbReference type="InterPro" id="IPR004149">
    <property type="entry name" value="Znf_DNAligase_C4"/>
</dbReference>
<dbReference type="NCBIfam" id="TIGR00575">
    <property type="entry name" value="dnlj"/>
    <property type="match status" value="1"/>
</dbReference>
<dbReference type="NCBIfam" id="NF005932">
    <property type="entry name" value="PRK07956.1"/>
    <property type="match status" value="1"/>
</dbReference>
<dbReference type="PANTHER" id="PTHR23389">
    <property type="entry name" value="CHROMOSOME TRANSMISSION FIDELITY FACTOR 18"/>
    <property type="match status" value="1"/>
</dbReference>
<dbReference type="PANTHER" id="PTHR23389:SF9">
    <property type="entry name" value="DNA LIGASE"/>
    <property type="match status" value="1"/>
</dbReference>
<dbReference type="Pfam" id="PF00533">
    <property type="entry name" value="BRCT"/>
    <property type="match status" value="1"/>
</dbReference>
<dbReference type="Pfam" id="PF01653">
    <property type="entry name" value="DNA_ligase_aden"/>
    <property type="match status" value="1"/>
</dbReference>
<dbReference type="Pfam" id="PF03120">
    <property type="entry name" value="DNA_ligase_OB"/>
    <property type="match status" value="1"/>
</dbReference>
<dbReference type="Pfam" id="PF03119">
    <property type="entry name" value="DNA_ligase_ZBD"/>
    <property type="match status" value="1"/>
</dbReference>
<dbReference type="Pfam" id="PF12826">
    <property type="entry name" value="HHH_2"/>
    <property type="match status" value="1"/>
</dbReference>
<dbReference type="Pfam" id="PF14520">
    <property type="entry name" value="HHH_5"/>
    <property type="match status" value="1"/>
</dbReference>
<dbReference type="Pfam" id="PF22745">
    <property type="entry name" value="Nlig-Ia"/>
    <property type="match status" value="1"/>
</dbReference>
<dbReference type="PIRSF" id="PIRSF001604">
    <property type="entry name" value="LigA"/>
    <property type="match status" value="1"/>
</dbReference>
<dbReference type="SMART" id="SM00292">
    <property type="entry name" value="BRCT"/>
    <property type="match status" value="1"/>
</dbReference>
<dbReference type="SMART" id="SM00278">
    <property type="entry name" value="HhH1"/>
    <property type="match status" value="3"/>
</dbReference>
<dbReference type="SMART" id="SM00532">
    <property type="entry name" value="LIGANc"/>
    <property type="match status" value="1"/>
</dbReference>
<dbReference type="SUPFAM" id="SSF52113">
    <property type="entry name" value="BRCT domain"/>
    <property type="match status" value="1"/>
</dbReference>
<dbReference type="SUPFAM" id="SSF56091">
    <property type="entry name" value="DNA ligase/mRNA capping enzyme, catalytic domain"/>
    <property type="match status" value="1"/>
</dbReference>
<dbReference type="SUPFAM" id="SSF50249">
    <property type="entry name" value="Nucleic acid-binding proteins"/>
    <property type="match status" value="1"/>
</dbReference>
<dbReference type="SUPFAM" id="SSF47781">
    <property type="entry name" value="RuvA domain 2-like"/>
    <property type="match status" value="1"/>
</dbReference>
<dbReference type="PROSITE" id="PS50172">
    <property type="entry name" value="BRCT"/>
    <property type="match status" value="1"/>
</dbReference>
<dbReference type="PROSITE" id="PS01055">
    <property type="entry name" value="DNA_LIGASE_N1"/>
    <property type="match status" value="1"/>
</dbReference>
<dbReference type="PROSITE" id="PS01056">
    <property type="entry name" value="DNA_LIGASE_N2"/>
    <property type="match status" value="1"/>
</dbReference>
<feature type="chain" id="PRO_0000380297" description="DNA ligase">
    <location>
        <begin position="1"/>
        <end position="669"/>
    </location>
</feature>
<feature type="domain" description="BRCT" evidence="1">
    <location>
        <begin position="591"/>
        <end position="669"/>
    </location>
</feature>
<feature type="active site" description="N6-AMP-lysine intermediate" evidence="1">
    <location>
        <position position="116"/>
    </location>
</feature>
<feature type="binding site" evidence="1">
    <location>
        <begin position="34"/>
        <end position="38"/>
    </location>
    <ligand>
        <name>NAD(+)</name>
        <dbReference type="ChEBI" id="CHEBI:57540"/>
    </ligand>
</feature>
<feature type="binding site" evidence="1">
    <location>
        <begin position="83"/>
        <end position="84"/>
    </location>
    <ligand>
        <name>NAD(+)</name>
        <dbReference type="ChEBI" id="CHEBI:57540"/>
    </ligand>
</feature>
<feature type="binding site" evidence="1">
    <location>
        <position position="114"/>
    </location>
    <ligand>
        <name>NAD(+)</name>
        <dbReference type="ChEBI" id="CHEBI:57540"/>
    </ligand>
</feature>
<feature type="binding site" evidence="1">
    <location>
        <position position="137"/>
    </location>
    <ligand>
        <name>NAD(+)</name>
        <dbReference type="ChEBI" id="CHEBI:57540"/>
    </ligand>
</feature>
<feature type="binding site" evidence="1">
    <location>
        <position position="171"/>
    </location>
    <ligand>
        <name>NAD(+)</name>
        <dbReference type="ChEBI" id="CHEBI:57540"/>
    </ligand>
</feature>
<feature type="binding site" evidence="1">
    <location>
        <position position="287"/>
    </location>
    <ligand>
        <name>NAD(+)</name>
        <dbReference type="ChEBI" id="CHEBI:57540"/>
    </ligand>
</feature>
<feature type="binding site" evidence="1">
    <location>
        <position position="311"/>
    </location>
    <ligand>
        <name>NAD(+)</name>
        <dbReference type="ChEBI" id="CHEBI:57540"/>
    </ligand>
</feature>
<feature type="binding site" evidence="1">
    <location>
        <position position="405"/>
    </location>
    <ligand>
        <name>Zn(2+)</name>
        <dbReference type="ChEBI" id="CHEBI:29105"/>
    </ligand>
</feature>
<feature type="binding site" evidence="1">
    <location>
        <position position="408"/>
    </location>
    <ligand>
        <name>Zn(2+)</name>
        <dbReference type="ChEBI" id="CHEBI:29105"/>
    </ligand>
</feature>
<feature type="binding site" evidence="1">
    <location>
        <position position="423"/>
    </location>
    <ligand>
        <name>Zn(2+)</name>
        <dbReference type="ChEBI" id="CHEBI:29105"/>
    </ligand>
</feature>
<feature type="binding site" evidence="1">
    <location>
        <position position="428"/>
    </location>
    <ligand>
        <name>Zn(2+)</name>
        <dbReference type="ChEBI" id="CHEBI:29105"/>
    </ligand>
</feature>
<comment type="function">
    <text evidence="1">DNA ligase that catalyzes the formation of phosphodiester linkages between 5'-phosphoryl and 3'-hydroxyl groups in double-stranded DNA using NAD as a coenzyme and as the energy source for the reaction. It is essential for DNA replication and repair of damaged DNA.</text>
</comment>
<comment type="catalytic activity">
    <reaction evidence="1">
        <text>NAD(+) + (deoxyribonucleotide)n-3'-hydroxyl + 5'-phospho-(deoxyribonucleotide)m = (deoxyribonucleotide)n+m + AMP + beta-nicotinamide D-nucleotide.</text>
        <dbReference type="EC" id="6.5.1.2"/>
    </reaction>
</comment>
<comment type="cofactor">
    <cofactor evidence="1">
        <name>Mg(2+)</name>
        <dbReference type="ChEBI" id="CHEBI:18420"/>
    </cofactor>
    <cofactor evidence="1">
        <name>Mn(2+)</name>
        <dbReference type="ChEBI" id="CHEBI:29035"/>
    </cofactor>
</comment>
<comment type="similarity">
    <text evidence="1">Belongs to the NAD-dependent DNA ligase family. LigA subfamily.</text>
</comment>
<sequence>MSKEIAKKRIEELRDLLNTFNYQYHVLDNPSVSDAEYDRNMQELIKLEAENPEFMSEDSPSIRVGGTVLDIFEKVTHKSPMLSLGNAFNEGDLRDFDRRVRQGIDDANVRYICELKIDGLAVSLHYEKGRFIQGATRGDGVTGEDITQNLKTIKAIPLRLNEEVTLEARGEAYMPKRSFVKLNEEKEQNGEDVFANPRNAAAGSIRQLDPKIAAKRNLSMFVYGLANVEEKTIPSHSESLDYLGELGFKTNPNRRTCETIEEVIAYVEEWQEKRPHLDYEIDGIVIKVDDVALQESLGTTAKSPRWAIAYKFPAEEVVTRLTGIELSVGRTGVVTPTAELEPVRVAGTIVRRASLHNEDLIREKDIRIGDYVVVKKAGDIIPEVVNVIFDKRTGGEEEYHMPTHCPACESELVRLEEEVALRCINPTCPAQIREGLIHFVSRNAMNIDGLGERVITQLFDADYIRTFADLYSLTKEQLLQLERFGEKSATNLVQAIENSKENSLERLLFGLGIRHVGAKAARTFAEHFETMDALVKATEEELKAINEIGEKMAQSVVAYFDNEDVLELLQQFKEYGVNMTYKGIKIADLQNVESYFAGKTVVLTGKLEVMGRSEAKKKIEALGGKVTGSVSKSTDLVVAGEAAGSKLAQAEKHNVEVWNEERFLQELNK</sequence>
<gene>
    <name evidence="1" type="primary">ligA</name>
    <name type="ordered locus">BAA_0360</name>
</gene>
<name>DNLJ_BACAA</name>
<protein>
    <recommendedName>
        <fullName evidence="1">DNA ligase</fullName>
        <ecNumber evidence="1">6.5.1.2</ecNumber>
    </recommendedName>
    <alternativeName>
        <fullName evidence="1">Polydeoxyribonucleotide synthase [NAD(+)]</fullName>
    </alternativeName>
</protein>
<keyword id="KW-0227">DNA damage</keyword>
<keyword id="KW-0234">DNA repair</keyword>
<keyword id="KW-0235">DNA replication</keyword>
<keyword id="KW-0436">Ligase</keyword>
<keyword id="KW-0460">Magnesium</keyword>
<keyword id="KW-0464">Manganese</keyword>
<keyword id="KW-0479">Metal-binding</keyword>
<keyword id="KW-0520">NAD</keyword>
<keyword id="KW-0862">Zinc</keyword>